<accession>Q37600</accession>
<comment type="function">
    <text evidence="1">Component of the cytochrome c oxidase, the last enzyme in the mitochondrial electron transport chain which drives oxidative phosphorylation. The respiratory chain contains 3 multisubunit complexes succinate dehydrogenase (complex II, CII), ubiquinol-cytochrome c oxidoreductase (cytochrome b-c1 complex, complex III, CIII) and cytochrome c oxidase (complex IV, CIV), that cooperate to transfer electrons derived from NADH and succinate to molecular oxygen, creating an electrochemical gradient over the inner membrane that drives transmembrane transport and the ATP synthase. Cytochrome c oxidase is the component of the respiratory chain that catalyzes the reduction of oxygen to water. Electrons originating from reduced cytochrome c in the intermembrane space (IMS) are transferred via the dinuclear copper A center (CU(A)) of subunit 2 and heme A of subunit 1 to the active site in subunit 1, a binuclear center (BNC) formed by heme A3 and copper B (CU(B)). The BNC reduces molecular oxygen to 2 water molecules using 4 electrons from cytochrome c in the IMS and 4 protons from the mitochondrial matrix.</text>
</comment>
<comment type="catalytic activity">
    <reaction evidence="1">
        <text>4 Fe(II)-[cytochrome c] + O2 + 8 H(+)(in) = 4 Fe(III)-[cytochrome c] + 2 H2O + 4 H(+)(out)</text>
        <dbReference type="Rhea" id="RHEA:11436"/>
        <dbReference type="Rhea" id="RHEA-COMP:10350"/>
        <dbReference type="Rhea" id="RHEA-COMP:14399"/>
        <dbReference type="ChEBI" id="CHEBI:15377"/>
        <dbReference type="ChEBI" id="CHEBI:15378"/>
        <dbReference type="ChEBI" id="CHEBI:15379"/>
        <dbReference type="ChEBI" id="CHEBI:29033"/>
        <dbReference type="ChEBI" id="CHEBI:29034"/>
        <dbReference type="EC" id="7.1.1.9"/>
    </reaction>
    <physiologicalReaction direction="left-to-right" evidence="1">
        <dbReference type="Rhea" id="RHEA:11437"/>
    </physiologicalReaction>
</comment>
<comment type="subunit">
    <text evidence="1">Component of the cytochrome c oxidase (complex IV, CIV), a multisubunit enzyme composed of a catalytic core of 3 subunits and several supernumerary subunits. The complex exists as a monomer or a dimer and forms supercomplexes (SCs) in the inner mitochondrial membrane with ubiquinol-cytochrome c oxidoreductase (cytochrome b-c1 complex, complex III, CIII).</text>
</comment>
<comment type="subcellular location">
    <subcellularLocation>
        <location evidence="1">Mitochondrion inner membrane</location>
        <topology evidence="1">Multi-pass membrane protein</topology>
    </subcellularLocation>
</comment>
<comment type="similarity">
    <text evidence="3">Belongs to the cytochrome c oxidase subunit 3 family.</text>
</comment>
<reference key="1">
    <citation type="journal article" date="1995" name="Plant Physiol. Biochem.">
        <title>Characterisation of the cox3, nad7 and atp6 genes from the mitochondrial genome of the brown alga Pylaiella littoralis.</title>
        <authorList>
            <person name="Fontaine J.-M."/>
            <person name="Rousvoal S."/>
            <person name="Delaroque N."/>
            <person name="Loiseaux-De Goer S."/>
        </authorList>
    </citation>
    <scope>NUCLEOTIDE SEQUENCE [GENOMIC DNA]</scope>
</reference>
<organism>
    <name type="scientific">Pylaiella littoralis</name>
    <name type="common">Seaweed</name>
    <name type="synonym">Conferva littoralis</name>
    <dbReference type="NCBI Taxonomy" id="2885"/>
    <lineage>
        <taxon>Eukaryota</taxon>
        <taxon>Sar</taxon>
        <taxon>Stramenopiles</taxon>
        <taxon>Ochrophyta</taxon>
        <taxon>PX clade</taxon>
        <taxon>Phaeophyceae</taxon>
        <taxon>Ectocarpales</taxon>
        <taxon>Acinetosporaceae</taxon>
        <taxon>Pylaiella</taxon>
    </lineage>
</organism>
<geneLocation type="mitochondrion"/>
<evidence type="ECO:0000250" key="1">
    <source>
        <dbReference type="UniProtKB" id="P00420"/>
    </source>
</evidence>
<evidence type="ECO:0000255" key="2"/>
<evidence type="ECO:0000305" key="3"/>
<protein>
    <recommendedName>
        <fullName>Cytochrome c oxidase subunit 3</fullName>
        <ecNumber>7.1.1.9</ecNumber>
    </recommendedName>
    <alternativeName>
        <fullName>Cytochrome c oxidase polypeptide III</fullName>
    </alternativeName>
</protein>
<feature type="chain" id="PRO_0000183840" description="Cytochrome c oxidase subunit 3">
    <location>
        <begin position="1"/>
        <end position="272"/>
    </location>
</feature>
<feature type="transmembrane region" description="Helical" evidence="2">
    <location>
        <begin position="20"/>
        <end position="40"/>
    </location>
</feature>
<feature type="transmembrane region" description="Helical" evidence="2">
    <location>
        <begin position="45"/>
        <end position="65"/>
    </location>
</feature>
<feature type="transmembrane region" description="Helical" evidence="2">
    <location>
        <begin position="89"/>
        <end position="109"/>
    </location>
</feature>
<feature type="transmembrane region" description="Helical" evidence="2">
    <location>
        <begin position="128"/>
        <end position="148"/>
    </location>
</feature>
<feature type="transmembrane region" description="Helical" evidence="2">
    <location>
        <begin position="166"/>
        <end position="186"/>
    </location>
</feature>
<feature type="transmembrane region" description="Helical" evidence="2">
    <location>
        <begin position="204"/>
        <end position="224"/>
    </location>
</feature>
<feature type="transmembrane region" description="Helical" evidence="2">
    <location>
        <begin position="248"/>
        <end position="268"/>
    </location>
</feature>
<gene>
    <name type="primary">COX3</name>
</gene>
<proteinExistence type="inferred from homology"/>
<keyword id="KW-0472">Membrane</keyword>
<keyword id="KW-0496">Mitochondrion</keyword>
<keyword id="KW-0999">Mitochondrion inner membrane</keyword>
<keyword id="KW-1278">Translocase</keyword>
<keyword id="KW-0812">Transmembrane</keyword>
<keyword id="KW-1133">Transmembrane helix</keyword>
<sequence>MKSTAKMIQRHPFHLVDPSPWPLVAALGGLSLTFGGVLFMHNYEGGGELLCLGFFTILYVMFTWWRDVIREALFEGQHTLAVQQGLRMGMILFIVSEIMFFFAFFWAFFTSSISPVFNIGGVWPPTDVVAISPWGLPFLNTILLLSSGASVTWAHHAIVGGLKKEAMQGLSVTLAFAIAFTAMQGFEYSGAPFGMSDGVYGSVFYMATGFHGFHVIIGTIFLFICTIRLYLSHFSCQHHFGFEAAAWYWHFVDVVWLFLFLTIYWWGFNITV</sequence>
<name>COX3_PYLLI</name>
<dbReference type="EC" id="7.1.1.9"/>
<dbReference type="EMBL" id="Z37967">
    <property type="protein sequence ID" value="CAA86022.1"/>
    <property type="molecule type" value="Genomic_DNA"/>
</dbReference>
<dbReference type="PIR" id="S57460">
    <property type="entry name" value="S57460"/>
</dbReference>
<dbReference type="RefSeq" id="NP_150402.1">
    <property type="nucleotide sequence ID" value="NC_003055.1"/>
</dbReference>
<dbReference type="SMR" id="Q37600"/>
<dbReference type="GeneID" id="803717"/>
<dbReference type="GO" id="GO:0005743">
    <property type="term" value="C:mitochondrial inner membrane"/>
    <property type="evidence" value="ECO:0007669"/>
    <property type="project" value="UniProtKB-SubCell"/>
</dbReference>
<dbReference type="GO" id="GO:0004129">
    <property type="term" value="F:cytochrome-c oxidase activity"/>
    <property type="evidence" value="ECO:0007669"/>
    <property type="project" value="UniProtKB-EC"/>
</dbReference>
<dbReference type="GO" id="GO:0006123">
    <property type="term" value="P:mitochondrial electron transport, cytochrome c to oxygen"/>
    <property type="evidence" value="ECO:0007669"/>
    <property type="project" value="TreeGrafter"/>
</dbReference>
<dbReference type="CDD" id="cd01665">
    <property type="entry name" value="Cyt_c_Oxidase_III"/>
    <property type="match status" value="1"/>
</dbReference>
<dbReference type="FunFam" id="1.10.287.70:FF:000082">
    <property type="entry name" value="Cytochrome c oxidase subunit 3"/>
    <property type="match status" value="1"/>
</dbReference>
<dbReference type="FunFam" id="1.20.120.80:FF:000002">
    <property type="entry name" value="Cytochrome c oxidase subunit 3"/>
    <property type="match status" value="1"/>
</dbReference>
<dbReference type="Gene3D" id="1.10.287.70">
    <property type="match status" value="1"/>
</dbReference>
<dbReference type="Gene3D" id="1.20.120.80">
    <property type="entry name" value="Cytochrome c oxidase, subunit III, four-helix bundle"/>
    <property type="match status" value="1"/>
</dbReference>
<dbReference type="InterPro" id="IPR024791">
    <property type="entry name" value="Cyt_c/ubiquinol_Oxase_su3"/>
</dbReference>
<dbReference type="InterPro" id="IPR033945">
    <property type="entry name" value="Cyt_c_oxase_su3_dom"/>
</dbReference>
<dbReference type="InterPro" id="IPR000298">
    <property type="entry name" value="Cyt_c_oxidase-like_su3"/>
</dbReference>
<dbReference type="InterPro" id="IPR035973">
    <property type="entry name" value="Cyt_c_oxidase_su3-like_sf"/>
</dbReference>
<dbReference type="InterPro" id="IPR013833">
    <property type="entry name" value="Cyt_c_oxidase_su3_a-hlx"/>
</dbReference>
<dbReference type="PANTHER" id="PTHR11403:SF7">
    <property type="entry name" value="CYTOCHROME C OXIDASE SUBUNIT 3"/>
    <property type="match status" value="1"/>
</dbReference>
<dbReference type="PANTHER" id="PTHR11403">
    <property type="entry name" value="CYTOCHROME C OXIDASE SUBUNIT III"/>
    <property type="match status" value="1"/>
</dbReference>
<dbReference type="Pfam" id="PF00510">
    <property type="entry name" value="COX3"/>
    <property type="match status" value="1"/>
</dbReference>
<dbReference type="SUPFAM" id="SSF81452">
    <property type="entry name" value="Cytochrome c oxidase subunit III-like"/>
    <property type="match status" value="1"/>
</dbReference>
<dbReference type="PROSITE" id="PS50253">
    <property type="entry name" value="COX3"/>
    <property type="match status" value="1"/>
</dbReference>